<sequence length="89" mass="9935">MKLTCVLIVAVLFLTACQLATAENSREEQGYSAVRSSDQIQDSDLKLTKSCTDDFEPCEAGFENCCSKSCFEFEDVYVCGVSIDYYDSR</sequence>
<name>O165_CONBU</name>
<organism>
    <name type="scientific">Conus bullatus</name>
    <name type="common">Bubble cone</name>
    <dbReference type="NCBI Taxonomy" id="89438"/>
    <lineage>
        <taxon>Eukaryota</taxon>
        <taxon>Metazoa</taxon>
        <taxon>Spiralia</taxon>
        <taxon>Lophotrochozoa</taxon>
        <taxon>Mollusca</taxon>
        <taxon>Gastropoda</taxon>
        <taxon>Caenogastropoda</taxon>
        <taxon>Neogastropoda</taxon>
        <taxon>Conoidea</taxon>
        <taxon>Conidae</taxon>
        <taxon>Conus</taxon>
        <taxon>Textilia</taxon>
    </lineage>
</organism>
<evidence type="ECO:0000250" key="1"/>
<evidence type="ECO:0000255" key="2"/>
<evidence type="ECO:0000305" key="3"/>
<accession>P0CY64</accession>
<proteinExistence type="evidence at transcript level"/>
<dbReference type="GO" id="GO:0005576">
    <property type="term" value="C:extracellular region"/>
    <property type="evidence" value="ECO:0007669"/>
    <property type="project" value="UniProtKB-SubCell"/>
</dbReference>
<dbReference type="GO" id="GO:0008200">
    <property type="term" value="F:ion channel inhibitor activity"/>
    <property type="evidence" value="ECO:0007669"/>
    <property type="project" value="InterPro"/>
</dbReference>
<dbReference type="GO" id="GO:0090729">
    <property type="term" value="F:toxin activity"/>
    <property type="evidence" value="ECO:0007669"/>
    <property type="project" value="UniProtKB-KW"/>
</dbReference>
<dbReference type="InterPro" id="IPR004214">
    <property type="entry name" value="Conotoxin"/>
</dbReference>
<dbReference type="Pfam" id="PF02950">
    <property type="entry name" value="Conotoxin"/>
    <property type="match status" value="1"/>
</dbReference>
<comment type="subcellular location">
    <subcellularLocation>
        <location evidence="1">Secreted</location>
    </subcellularLocation>
</comment>
<comment type="tissue specificity">
    <text>Expressed by the venom duct.</text>
</comment>
<comment type="domain">
    <text>The presence of a 'disulfide through disulfide knot' structurally defines this protein as a knottin.</text>
</comment>
<comment type="domain">
    <text>The cysteine framework is VI/VII (C-C-CC-C-C).</text>
</comment>
<comment type="similarity">
    <text evidence="3">Belongs to the conotoxin O1 superfamily.</text>
</comment>
<feature type="signal peptide" evidence="2">
    <location>
        <begin position="1"/>
        <end position="22"/>
    </location>
</feature>
<feature type="propeptide" id="PRO_0000409943" evidence="3">
    <location>
        <begin position="23"/>
        <end position="49"/>
    </location>
</feature>
<feature type="peptide" id="PRO_0000409944" description="Conotoxin Bu5">
    <location>
        <begin position="50"/>
        <end position="79"/>
    </location>
</feature>
<feature type="propeptide" id="PRO_0000409945" evidence="3">
    <location>
        <begin position="80"/>
        <end position="89"/>
    </location>
</feature>
<feature type="modified residue" description="Cysteine amide" evidence="1">
    <location>
        <position position="79"/>
    </location>
</feature>
<feature type="disulfide bond" evidence="1">
    <location>
        <begin position="51"/>
        <end position="66"/>
    </location>
</feature>
<feature type="disulfide bond" evidence="1">
    <location>
        <begin position="58"/>
        <end position="70"/>
    </location>
</feature>
<feature type="disulfide bond" evidence="1">
    <location>
        <begin position="65"/>
        <end position="79"/>
    </location>
</feature>
<keyword id="KW-0027">Amidation</keyword>
<keyword id="KW-1015">Disulfide bond</keyword>
<keyword id="KW-0872">Ion channel impairing toxin</keyword>
<keyword id="KW-0960">Knottin</keyword>
<keyword id="KW-0528">Neurotoxin</keyword>
<keyword id="KW-0964">Secreted</keyword>
<keyword id="KW-0732">Signal</keyword>
<keyword id="KW-0800">Toxin</keyword>
<protein>
    <recommendedName>
        <fullName>Conotoxin Bu5</fullName>
    </recommendedName>
</protein>
<reference key="1">
    <citation type="journal article" date="2011" name="BMC Genomics">
        <title>Characterization of the Conus bullatus genome and its venom-duct transcriptome.</title>
        <authorList>
            <person name="Hu H."/>
            <person name="Bandyopadhyay P.K."/>
            <person name="Olivera B.M."/>
            <person name="Yandell M."/>
        </authorList>
    </citation>
    <scope>NUCLEOTIDE SEQUENCE [MRNA]</scope>
    <source>
        <tissue>Venom duct</tissue>
    </source>
</reference>